<reference key="1">
    <citation type="journal article" date="2006" name="J. Bacteriol.">
        <title>Pathogenomic sequence analysis of Bacillus cereus and Bacillus thuringiensis isolates closely related to Bacillus anthracis.</title>
        <authorList>
            <person name="Han C.S."/>
            <person name="Xie G."/>
            <person name="Challacombe J.F."/>
            <person name="Altherr M.R."/>
            <person name="Bhotika S.S."/>
            <person name="Bruce D."/>
            <person name="Campbell C.S."/>
            <person name="Campbell M.L."/>
            <person name="Chen J."/>
            <person name="Chertkov O."/>
            <person name="Cleland C."/>
            <person name="Dimitrijevic M."/>
            <person name="Doggett N.A."/>
            <person name="Fawcett J.J."/>
            <person name="Glavina T."/>
            <person name="Goodwin L.A."/>
            <person name="Hill K.K."/>
            <person name="Hitchcock P."/>
            <person name="Jackson P.J."/>
            <person name="Keim P."/>
            <person name="Kewalramani A.R."/>
            <person name="Longmire J."/>
            <person name="Lucas S."/>
            <person name="Malfatti S."/>
            <person name="McMurry K."/>
            <person name="Meincke L.J."/>
            <person name="Misra M."/>
            <person name="Moseman B.L."/>
            <person name="Mundt M."/>
            <person name="Munk A.C."/>
            <person name="Okinaka R.T."/>
            <person name="Parson-Quintana B."/>
            <person name="Reilly L.P."/>
            <person name="Richardson P."/>
            <person name="Robinson D.L."/>
            <person name="Rubin E."/>
            <person name="Saunders E."/>
            <person name="Tapia R."/>
            <person name="Tesmer J.G."/>
            <person name="Thayer N."/>
            <person name="Thompson L.S."/>
            <person name="Tice H."/>
            <person name="Ticknor L.O."/>
            <person name="Wills P.L."/>
            <person name="Brettin T.S."/>
            <person name="Gilna P."/>
        </authorList>
    </citation>
    <scope>NUCLEOTIDE SEQUENCE [LARGE SCALE GENOMIC DNA]</scope>
    <source>
        <strain>97-27</strain>
    </source>
</reference>
<dbReference type="EMBL" id="AE017355">
    <property type="protein sequence ID" value="AAT63848.1"/>
    <property type="molecule type" value="Genomic_DNA"/>
</dbReference>
<dbReference type="RefSeq" id="YP_039093.1">
    <property type="nucleotide sequence ID" value="NC_005957.1"/>
</dbReference>
<dbReference type="SMR" id="Q6HBI3"/>
<dbReference type="KEGG" id="btk:BT9727_4784"/>
<dbReference type="PATRIC" id="fig|281309.8.peg.5090"/>
<dbReference type="HOGENOM" id="CLU_114342_1_2_9"/>
<dbReference type="Proteomes" id="UP000001301">
    <property type="component" value="Chromosome"/>
</dbReference>
<dbReference type="GO" id="GO:0005886">
    <property type="term" value="C:plasma membrane"/>
    <property type="evidence" value="ECO:0007669"/>
    <property type="project" value="UniProtKB-SubCell"/>
</dbReference>
<dbReference type="GO" id="GO:0062054">
    <property type="term" value="F:fluoride channel activity"/>
    <property type="evidence" value="ECO:0007669"/>
    <property type="project" value="UniProtKB-UniRule"/>
</dbReference>
<dbReference type="GO" id="GO:0046872">
    <property type="term" value="F:metal ion binding"/>
    <property type="evidence" value="ECO:0007669"/>
    <property type="project" value="UniProtKB-KW"/>
</dbReference>
<dbReference type="GO" id="GO:0140114">
    <property type="term" value="P:cellular detoxification of fluoride"/>
    <property type="evidence" value="ECO:0007669"/>
    <property type="project" value="UniProtKB-UniRule"/>
</dbReference>
<dbReference type="HAMAP" id="MF_00454">
    <property type="entry name" value="FluC"/>
    <property type="match status" value="1"/>
</dbReference>
<dbReference type="InterPro" id="IPR003691">
    <property type="entry name" value="FluC"/>
</dbReference>
<dbReference type="NCBIfam" id="TIGR00494">
    <property type="entry name" value="crcB"/>
    <property type="match status" value="1"/>
</dbReference>
<dbReference type="PANTHER" id="PTHR28259">
    <property type="entry name" value="FLUORIDE EXPORT PROTEIN 1-RELATED"/>
    <property type="match status" value="1"/>
</dbReference>
<dbReference type="PANTHER" id="PTHR28259:SF1">
    <property type="entry name" value="FLUORIDE EXPORT PROTEIN 1-RELATED"/>
    <property type="match status" value="1"/>
</dbReference>
<dbReference type="Pfam" id="PF02537">
    <property type="entry name" value="CRCB"/>
    <property type="match status" value="1"/>
</dbReference>
<evidence type="ECO:0000255" key="1">
    <source>
        <dbReference type="HAMAP-Rule" id="MF_00454"/>
    </source>
</evidence>
<protein>
    <recommendedName>
        <fullName evidence="1">Fluoride-specific ion channel FluC 1</fullName>
    </recommendedName>
</protein>
<accession>Q6HBI3</accession>
<organism>
    <name type="scientific">Bacillus thuringiensis subsp. konkukian (strain 97-27)</name>
    <dbReference type="NCBI Taxonomy" id="281309"/>
    <lineage>
        <taxon>Bacteria</taxon>
        <taxon>Bacillati</taxon>
        <taxon>Bacillota</taxon>
        <taxon>Bacilli</taxon>
        <taxon>Bacillales</taxon>
        <taxon>Bacillaceae</taxon>
        <taxon>Bacillus</taxon>
        <taxon>Bacillus cereus group</taxon>
    </lineage>
</organism>
<comment type="function">
    <text evidence="1">Fluoride-specific ion channel. Important for reducing fluoride concentration in the cell, thus reducing its toxicity.</text>
</comment>
<comment type="catalytic activity">
    <reaction evidence="1">
        <text>fluoride(in) = fluoride(out)</text>
        <dbReference type="Rhea" id="RHEA:76159"/>
        <dbReference type="ChEBI" id="CHEBI:17051"/>
    </reaction>
    <physiologicalReaction direction="left-to-right" evidence="1">
        <dbReference type="Rhea" id="RHEA:76160"/>
    </physiologicalReaction>
</comment>
<comment type="activity regulation">
    <text evidence="1">Na(+) is not transported, but it plays an essential structural role and its presence is essential for fluoride channel function.</text>
</comment>
<comment type="subcellular location">
    <subcellularLocation>
        <location evidence="1">Cell membrane</location>
        <topology evidence="1">Multi-pass membrane protein</topology>
    </subcellularLocation>
</comment>
<comment type="similarity">
    <text evidence="1">Belongs to the fluoride channel Fluc/FEX (TC 1.A.43) family.</text>
</comment>
<gene>
    <name evidence="1" type="primary">fluC1</name>
    <name evidence="1" type="synonym">crcB1</name>
    <name type="ordered locus">BT9727_4784</name>
</gene>
<sequence>MKKLIYIIVGIAGILGALSRYYLGLTIHEFWHHTFPLATLLINLAGCFLLAWLTTYIAKRNLLPSDVITGIGTGFIGSFTTFSTFSVETVQLINYSEWSIAFLYVSCSILGGLIMSGLGYTLGDFLLKKHLTEGDHL</sequence>
<feature type="chain" id="PRO_0000110050" description="Fluoride-specific ion channel FluC 1">
    <location>
        <begin position="1"/>
        <end position="137"/>
    </location>
</feature>
<feature type="transmembrane region" description="Helical" evidence="1">
    <location>
        <begin position="4"/>
        <end position="24"/>
    </location>
</feature>
<feature type="transmembrane region" description="Helical" evidence="1">
    <location>
        <begin position="37"/>
        <end position="57"/>
    </location>
</feature>
<feature type="transmembrane region" description="Helical" evidence="1">
    <location>
        <begin position="67"/>
        <end position="87"/>
    </location>
</feature>
<feature type="transmembrane region" description="Helical" evidence="1">
    <location>
        <begin position="100"/>
        <end position="120"/>
    </location>
</feature>
<feature type="binding site" evidence="1">
    <location>
        <position position="77"/>
    </location>
    <ligand>
        <name>Na(+)</name>
        <dbReference type="ChEBI" id="CHEBI:29101"/>
        <note>structural</note>
    </ligand>
</feature>
<feature type="binding site" evidence="1">
    <location>
        <position position="80"/>
    </location>
    <ligand>
        <name>Na(+)</name>
        <dbReference type="ChEBI" id="CHEBI:29101"/>
        <note>structural</note>
    </ligand>
</feature>
<keyword id="KW-1003">Cell membrane</keyword>
<keyword id="KW-0407">Ion channel</keyword>
<keyword id="KW-0406">Ion transport</keyword>
<keyword id="KW-0472">Membrane</keyword>
<keyword id="KW-0479">Metal-binding</keyword>
<keyword id="KW-0915">Sodium</keyword>
<keyword id="KW-0812">Transmembrane</keyword>
<keyword id="KW-1133">Transmembrane helix</keyword>
<keyword id="KW-0813">Transport</keyword>
<proteinExistence type="inferred from homology"/>
<name>FLUC1_BACHK</name>